<name>ACEK_CUPMC</name>
<reference key="1">
    <citation type="journal article" date="2010" name="PLoS ONE">
        <title>The complete genome sequence of Cupriavidus metallidurans strain CH34, a master survivalist in harsh and anthropogenic environments.</title>
        <authorList>
            <person name="Janssen P.J."/>
            <person name="Van Houdt R."/>
            <person name="Moors H."/>
            <person name="Monsieurs P."/>
            <person name="Morin N."/>
            <person name="Michaux A."/>
            <person name="Benotmane M.A."/>
            <person name="Leys N."/>
            <person name="Vallaeys T."/>
            <person name="Lapidus A."/>
            <person name="Monchy S."/>
            <person name="Medigue C."/>
            <person name="Taghavi S."/>
            <person name="McCorkle S."/>
            <person name="Dunn J."/>
            <person name="van der Lelie D."/>
            <person name="Mergeay M."/>
        </authorList>
    </citation>
    <scope>NUCLEOTIDE SEQUENCE [LARGE SCALE GENOMIC DNA]</scope>
    <source>
        <strain>ATCC 43123 / DSM 2839 / NBRC 102507 / CH34</strain>
    </source>
</reference>
<organism>
    <name type="scientific">Cupriavidus metallidurans (strain ATCC 43123 / DSM 2839 / NBRC 102507 / CH34)</name>
    <name type="common">Ralstonia metallidurans</name>
    <dbReference type="NCBI Taxonomy" id="266264"/>
    <lineage>
        <taxon>Bacteria</taxon>
        <taxon>Pseudomonadati</taxon>
        <taxon>Pseudomonadota</taxon>
        <taxon>Betaproteobacteria</taxon>
        <taxon>Burkholderiales</taxon>
        <taxon>Burkholderiaceae</taxon>
        <taxon>Cupriavidus</taxon>
    </lineage>
</organism>
<proteinExistence type="inferred from homology"/>
<dbReference type="EC" id="2.7.11.5" evidence="1"/>
<dbReference type="EC" id="3.1.3.-" evidence="1"/>
<dbReference type="EMBL" id="CP000352">
    <property type="protein sequence ID" value="ABF06990.1"/>
    <property type="molecule type" value="Genomic_DNA"/>
</dbReference>
<dbReference type="RefSeq" id="WP_011515024.1">
    <property type="nucleotide sequence ID" value="NC_007973.1"/>
</dbReference>
<dbReference type="SMR" id="Q1LS86"/>
<dbReference type="STRING" id="266264.Rmet_0104"/>
<dbReference type="KEGG" id="rme:Rmet_0104"/>
<dbReference type="eggNOG" id="COG4579">
    <property type="taxonomic scope" value="Bacteria"/>
</dbReference>
<dbReference type="HOGENOM" id="CLU_033804_1_1_4"/>
<dbReference type="Proteomes" id="UP000002429">
    <property type="component" value="Chromosome"/>
</dbReference>
<dbReference type="GO" id="GO:0005737">
    <property type="term" value="C:cytoplasm"/>
    <property type="evidence" value="ECO:0007669"/>
    <property type="project" value="UniProtKB-SubCell"/>
</dbReference>
<dbReference type="GO" id="GO:0008772">
    <property type="term" value="F:[isocitrate dehydrogenase (NADP+)] kinase activity"/>
    <property type="evidence" value="ECO:0007669"/>
    <property type="project" value="UniProtKB-UniRule"/>
</dbReference>
<dbReference type="GO" id="GO:0016208">
    <property type="term" value="F:AMP binding"/>
    <property type="evidence" value="ECO:0007669"/>
    <property type="project" value="TreeGrafter"/>
</dbReference>
<dbReference type="GO" id="GO:0005524">
    <property type="term" value="F:ATP binding"/>
    <property type="evidence" value="ECO:0007669"/>
    <property type="project" value="UniProtKB-UniRule"/>
</dbReference>
<dbReference type="GO" id="GO:0004721">
    <property type="term" value="F:phosphoprotein phosphatase activity"/>
    <property type="evidence" value="ECO:0007669"/>
    <property type="project" value="UniProtKB-KW"/>
</dbReference>
<dbReference type="GO" id="GO:0004674">
    <property type="term" value="F:protein serine/threonine kinase activity"/>
    <property type="evidence" value="ECO:0007669"/>
    <property type="project" value="UniProtKB-KW"/>
</dbReference>
<dbReference type="GO" id="GO:0006006">
    <property type="term" value="P:glucose metabolic process"/>
    <property type="evidence" value="ECO:0007669"/>
    <property type="project" value="InterPro"/>
</dbReference>
<dbReference type="GO" id="GO:0006097">
    <property type="term" value="P:glyoxylate cycle"/>
    <property type="evidence" value="ECO:0007669"/>
    <property type="project" value="UniProtKB-UniRule"/>
</dbReference>
<dbReference type="GO" id="GO:0006099">
    <property type="term" value="P:tricarboxylic acid cycle"/>
    <property type="evidence" value="ECO:0007669"/>
    <property type="project" value="UniProtKB-UniRule"/>
</dbReference>
<dbReference type="HAMAP" id="MF_00747">
    <property type="entry name" value="AceK"/>
    <property type="match status" value="1"/>
</dbReference>
<dbReference type="InterPro" id="IPR046855">
    <property type="entry name" value="AceK_kinase"/>
</dbReference>
<dbReference type="InterPro" id="IPR046854">
    <property type="entry name" value="AceK_regulatory"/>
</dbReference>
<dbReference type="InterPro" id="IPR010452">
    <property type="entry name" value="Isocitrate_DH_AceK"/>
</dbReference>
<dbReference type="NCBIfam" id="NF002804">
    <property type="entry name" value="PRK02946.1"/>
    <property type="match status" value="1"/>
</dbReference>
<dbReference type="PANTHER" id="PTHR39559">
    <property type="match status" value="1"/>
</dbReference>
<dbReference type="PANTHER" id="PTHR39559:SF1">
    <property type="entry name" value="ISOCITRATE DEHYDROGENASE KINASE_PHOSPHATASE"/>
    <property type="match status" value="1"/>
</dbReference>
<dbReference type="Pfam" id="PF06315">
    <property type="entry name" value="AceK_kinase"/>
    <property type="match status" value="1"/>
</dbReference>
<dbReference type="Pfam" id="PF20423">
    <property type="entry name" value="AceK_regulatory"/>
    <property type="match status" value="1"/>
</dbReference>
<dbReference type="PIRSF" id="PIRSF000719">
    <property type="entry name" value="AceK"/>
    <property type="match status" value="1"/>
</dbReference>
<keyword id="KW-0067">ATP-binding</keyword>
<keyword id="KW-0963">Cytoplasm</keyword>
<keyword id="KW-0329">Glyoxylate bypass</keyword>
<keyword id="KW-0378">Hydrolase</keyword>
<keyword id="KW-0418">Kinase</keyword>
<keyword id="KW-0547">Nucleotide-binding</keyword>
<keyword id="KW-0904">Protein phosphatase</keyword>
<keyword id="KW-1185">Reference proteome</keyword>
<keyword id="KW-0723">Serine/threonine-protein kinase</keyword>
<keyword id="KW-0808">Transferase</keyword>
<keyword id="KW-0816">Tricarboxylic acid cycle</keyword>
<accession>Q1LS86</accession>
<protein>
    <recommendedName>
        <fullName evidence="1">Isocitrate dehydrogenase kinase/phosphatase</fullName>
        <shortName evidence="1">IDH kinase/phosphatase</shortName>
        <shortName evidence="1">IDHK/P</shortName>
        <ecNumber evidence="1">2.7.11.5</ecNumber>
        <ecNumber evidence="1">3.1.3.-</ecNumber>
    </recommendedName>
</protein>
<feature type="chain" id="PRO_0000259156" description="Isocitrate dehydrogenase kinase/phosphatase">
    <location>
        <begin position="1"/>
        <end position="607"/>
    </location>
</feature>
<feature type="active site" evidence="1">
    <location>
        <position position="384"/>
    </location>
</feature>
<feature type="binding site" evidence="1">
    <location>
        <begin position="328"/>
        <end position="334"/>
    </location>
    <ligand>
        <name>ATP</name>
        <dbReference type="ChEBI" id="CHEBI:30616"/>
    </ligand>
</feature>
<feature type="binding site" evidence="1">
    <location>
        <position position="349"/>
    </location>
    <ligand>
        <name>ATP</name>
        <dbReference type="ChEBI" id="CHEBI:30616"/>
    </ligand>
</feature>
<evidence type="ECO:0000255" key="1">
    <source>
        <dbReference type="HAMAP-Rule" id="MF_00747"/>
    </source>
</evidence>
<sequence length="607" mass="71110">MSHFPKLLSSQIAYDVARTMLDGFDKHYRLFREVSIEAKARFEVGDWHGLQQLQRDRIAFYNQRVHETIVTLQDEYDAEDIEDEIWQQIKLHYIGLLTNHHQPELAETFFNSVFTRIQHRSYFNNDFIFVRPAISTEYIENEESPIKPTYRAYYPGSREGMAACFERIVNNFQLERPFEDLKRDAGYVARAITEHFGEFRIAPNFQVHTLSSLFFRNKTAFVIGRVINGDHTYPLVVPIIHAASGKLVLDTVLLHREQILILFSFAHAYFMVDMEIPSAYVTFLRDLLPRKSRAEIYTSLGLQKQGKNLFYRDFLHHLQHSSDKFISAPGIKGLVMLVFTLPSFPYVFKVIRDFFPAPKETTRELVKSKYQLVKQHDRVGRMADTLEYSDVAFPLSRFDDALVRELEQHAPSMIEYQRSKQGEDEIVVRHVYIERRMTPLNIWLQEGTDEQVDHGILEYGNAVKELIAANIFPGDMLYKNFGVTRHGRVVFYDYDEIEYLTDCNVRRVPAPRNEEEEMSGEVWYTVRPHDIFPETYGTFLLGDPRVRAAFMRHHPDFFDAAMWQHHKDRLLAGHVHDFFAYHSQERFIHRYGSGATGPATEEPRRAA</sequence>
<comment type="function">
    <text evidence="1">Bifunctional enzyme which can phosphorylate or dephosphorylate isocitrate dehydrogenase (IDH) on a specific serine residue. This is a regulatory mechanism which enables bacteria to bypass the Krebs cycle via the glyoxylate shunt in response to the source of carbon. When bacteria are grown on glucose, IDH is fully active and unphosphorylated, but when grown on acetate or ethanol, the activity of IDH declines drastically concomitant with its phosphorylation.</text>
</comment>
<comment type="catalytic activity">
    <reaction evidence="1">
        <text>L-seryl-[isocitrate dehydrogenase] + ATP = O-phospho-L-seryl-[isocitrate dehydrogenase] + ADP + H(+)</text>
        <dbReference type="Rhea" id="RHEA:43540"/>
        <dbReference type="Rhea" id="RHEA-COMP:10605"/>
        <dbReference type="Rhea" id="RHEA-COMP:10606"/>
        <dbReference type="ChEBI" id="CHEBI:15378"/>
        <dbReference type="ChEBI" id="CHEBI:29999"/>
        <dbReference type="ChEBI" id="CHEBI:30616"/>
        <dbReference type="ChEBI" id="CHEBI:83421"/>
        <dbReference type="ChEBI" id="CHEBI:456216"/>
        <dbReference type="EC" id="2.7.11.5"/>
    </reaction>
</comment>
<comment type="subcellular location">
    <subcellularLocation>
        <location evidence="1">Cytoplasm</location>
    </subcellularLocation>
</comment>
<comment type="similarity">
    <text evidence="1">Belongs to the AceK family.</text>
</comment>
<gene>
    <name evidence="1" type="primary">aceK</name>
    <name type="ordered locus">Rmet_0104</name>
</gene>